<evidence type="ECO:0000255" key="1">
    <source>
        <dbReference type="HAMAP-Rule" id="MF_00570"/>
    </source>
</evidence>
<organism>
    <name type="scientific">Cronobacter sakazakii (strain ATCC BAA-894)</name>
    <name type="common">Enterobacter sakazakii</name>
    <dbReference type="NCBI Taxonomy" id="290339"/>
    <lineage>
        <taxon>Bacteria</taxon>
        <taxon>Pseudomonadati</taxon>
        <taxon>Pseudomonadota</taxon>
        <taxon>Gammaproteobacteria</taxon>
        <taxon>Enterobacterales</taxon>
        <taxon>Enterobacteriaceae</taxon>
        <taxon>Cronobacter</taxon>
    </lineage>
</organism>
<feature type="chain" id="PRO_1000025002" description="Nicotinate phosphoribosyltransferase">
    <location>
        <begin position="1"/>
        <end position="400"/>
    </location>
</feature>
<feature type="modified residue" description="Phosphohistidine; by autocatalysis" evidence="1">
    <location>
        <position position="220"/>
    </location>
</feature>
<gene>
    <name evidence="1" type="primary">pncB</name>
    <name type="ordered locus">ESA_02409</name>
</gene>
<protein>
    <recommendedName>
        <fullName evidence="1">Nicotinate phosphoribosyltransferase</fullName>
        <shortName evidence="1">NAPRTase</shortName>
        <ecNumber evidence="1">6.3.4.21</ecNumber>
    </recommendedName>
</protein>
<proteinExistence type="inferred from homology"/>
<sequence length="400" mass="45785">MTQYASPLLQTLLDTDAYKLHMQQAVFHHYYDVHVAAEFRCRGDDLLGIYADAIREQVDAMQHLALSDAEYQWLSGLPFFKSDYLQWLKTFRYDPTQVQIRNDGGKLDIRLSGPWREVIMWEVPLLAVISELVHRYRSPEASVDQALAHLEVKLDDFRTMTDGLDLSAFRLMDFGTRRRFSRDVQQAIVERLKLEPWFIGTSNYDLARRLSLTPMGTQAHEWFQAHQQISPDLANSQIAALQAWLDEYPDMLGIALTDCITMDAFLRDFGPEFAGRYQGLRHDSGDPVQWGEKAIAHYQQLGIDPLSKTLIFSDNLDFAKAIELYRHFADRVKLGFGIGTRLTCDIPHVKPLNIVIKLVECNGRPVAKLSDSPGKTICHDKAFVRALRKAFDLPQVRKAS</sequence>
<reference key="1">
    <citation type="journal article" date="2010" name="PLoS ONE">
        <title>Genome sequence of Cronobacter sakazakii BAA-894 and comparative genomic hybridization analysis with other Cronobacter species.</title>
        <authorList>
            <person name="Kucerova E."/>
            <person name="Clifton S.W."/>
            <person name="Xia X.Q."/>
            <person name="Long F."/>
            <person name="Porwollik S."/>
            <person name="Fulton L."/>
            <person name="Fronick C."/>
            <person name="Minx P."/>
            <person name="Kyung K."/>
            <person name="Warren W."/>
            <person name="Fulton R."/>
            <person name="Feng D."/>
            <person name="Wollam A."/>
            <person name="Shah N."/>
            <person name="Bhonagiri V."/>
            <person name="Nash W.E."/>
            <person name="Hallsworth-Pepin K."/>
            <person name="Wilson R.K."/>
            <person name="McClelland M."/>
            <person name="Forsythe S.J."/>
        </authorList>
    </citation>
    <scope>NUCLEOTIDE SEQUENCE [LARGE SCALE GENOMIC DNA]</scope>
    <source>
        <strain>ATCC BAA-894</strain>
    </source>
</reference>
<comment type="function">
    <text evidence="1">Catalyzes the synthesis of beta-nicotinate D-ribonucleotide from nicotinate and 5-phospho-D-ribose 1-phosphate at the expense of ATP.</text>
</comment>
<comment type="catalytic activity">
    <reaction evidence="1">
        <text>nicotinate + 5-phospho-alpha-D-ribose 1-diphosphate + ATP + H2O = nicotinate beta-D-ribonucleotide + ADP + phosphate + diphosphate</text>
        <dbReference type="Rhea" id="RHEA:36163"/>
        <dbReference type="ChEBI" id="CHEBI:15377"/>
        <dbReference type="ChEBI" id="CHEBI:30616"/>
        <dbReference type="ChEBI" id="CHEBI:32544"/>
        <dbReference type="ChEBI" id="CHEBI:33019"/>
        <dbReference type="ChEBI" id="CHEBI:43474"/>
        <dbReference type="ChEBI" id="CHEBI:57502"/>
        <dbReference type="ChEBI" id="CHEBI:58017"/>
        <dbReference type="ChEBI" id="CHEBI:456216"/>
        <dbReference type="EC" id="6.3.4.21"/>
    </reaction>
</comment>
<comment type="pathway">
    <text evidence="1">Cofactor biosynthesis; NAD(+) biosynthesis; nicotinate D-ribonucleotide from nicotinate: step 1/1.</text>
</comment>
<comment type="PTM">
    <text evidence="1">Transiently phosphorylated on a His residue during the reaction cycle. Phosphorylation strongly increases the affinity for substrates and increases the rate of nicotinate D-ribonucleotide production. Dephosphorylation regenerates the low-affinity form of the enzyme, leading to product release.</text>
</comment>
<comment type="similarity">
    <text evidence="1">Belongs to the NAPRTase family.</text>
</comment>
<name>PNCB_CROS8</name>
<accession>A7MEW8</accession>
<dbReference type="EC" id="6.3.4.21" evidence="1"/>
<dbReference type="EMBL" id="CP000783">
    <property type="protein sequence ID" value="ABU77655.1"/>
    <property type="molecule type" value="Genomic_DNA"/>
</dbReference>
<dbReference type="RefSeq" id="WP_012125199.1">
    <property type="nucleotide sequence ID" value="NC_009778.1"/>
</dbReference>
<dbReference type="SMR" id="A7MEW8"/>
<dbReference type="KEGG" id="esa:ESA_02409"/>
<dbReference type="PATRIC" id="fig|290339.8.peg.2141"/>
<dbReference type="HOGENOM" id="CLU_030991_1_0_6"/>
<dbReference type="UniPathway" id="UPA00253">
    <property type="reaction ID" value="UER00457"/>
</dbReference>
<dbReference type="Proteomes" id="UP000000260">
    <property type="component" value="Chromosome"/>
</dbReference>
<dbReference type="GO" id="GO:0005829">
    <property type="term" value="C:cytosol"/>
    <property type="evidence" value="ECO:0007669"/>
    <property type="project" value="TreeGrafter"/>
</dbReference>
<dbReference type="GO" id="GO:0004516">
    <property type="term" value="F:nicotinate phosphoribosyltransferase activity"/>
    <property type="evidence" value="ECO:0007669"/>
    <property type="project" value="UniProtKB-UniRule"/>
</dbReference>
<dbReference type="GO" id="GO:0034355">
    <property type="term" value="P:NAD biosynthetic process via the salvage pathway"/>
    <property type="evidence" value="ECO:0007669"/>
    <property type="project" value="TreeGrafter"/>
</dbReference>
<dbReference type="CDD" id="cd01401">
    <property type="entry name" value="PncB_like"/>
    <property type="match status" value="1"/>
</dbReference>
<dbReference type="FunFam" id="3.20.140.10:FF:000001">
    <property type="entry name" value="Nicotinate phosphoribosyltransferase"/>
    <property type="match status" value="1"/>
</dbReference>
<dbReference type="Gene3D" id="3.20.140.10">
    <property type="entry name" value="nicotinate phosphoribosyltransferase"/>
    <property type="match status" value="1"/>
</dbReference>
<dbReference type="HAMAP" id="MF_00570">
    <property type="entry name" value="NAPRTase"/>
    <property type="match status" value="1"/>
</dbReference>
<dbReference type="InterPro" id="IPR041525">
    <property type="entry name" value="N/Namide_PRibTrfase"/>
</dbReference>
<dbReference type="InterPro" id="IPR040727">
    <property type="entry name" value="NAPRTase_N"/>
</dbReference>
<dbReference type="InterPro" id="IPR006406">
    <property type="entry name" value="Nic_PRibTrfase"/>
</dbReference>
<dbReference type="InterPro" id="IPR007229">
    <property type="entry name" value="Nic_PRibTrfase-Fam"/>
</dbReference>
<dbReference type="InterPro" id="IPR036068">
    <property type="entry name" value="Nicotinate_pribotase-like_C"/>
</dbReference>
<dbReference type="NCBIfam" id="TIGR01514">
    <property type="entry name" value="NAPRTase"/>
    <property type="match status" value="1"/>
</dbReference>
<dbReference type="NCBIfam" id="NF003704">
    <property type="entry name" value="PRK05321.1"/>
    <property type="match status" value="1"/>
</dbReference>
<dbReference type="PANTHER" id="PTHR11098">
    <property type="entry name" value="NICOTINATE PHOSPHORIBOSYLTRANSFERASE"/>
    <property type="match status" value="1"/>
</dbReference>
<dbReference type="PANTHER" id="PTHR11098:SF1">
    <property type="entry name" value="NICOTINATE PHOSPHORIBOSYLTRANSFERASE"/>
    <property type="match status" value="1"/>
</dbReference>
<dbReference type="Pfam" id="PF04095">
    <property type="entry name" value="NAPRTase"/>
    <property type="match status" value="1"/>
</dbReference>
<dbReference type="Pfam" id="PF17767">
    <property type="entry name" value="NAPRTase_N"/>
    <property type="match status" value="1"/>
</dbReference>
<dbReference type="PIRSF" id="PIRSF000484">
    <property type="entry name" value="NAPRT"/>
    <property type="match status" value="1"/>
</dbReference>
<dbReference type="SUPFAM" id="SSF51690">
    <property type="entry name" value="Nicotinate/Quinolinate PRTase C-terminal domain-like"/>
    <property type="match status" value="1"/>
</dbReference>
<dbReference type="SUPFAM" id="SSF54675">
    <property type="entry name" value="Nicotinate/Quinolinate PRTase N-terminal domain-like"/>
    <property type="match status" value="1"/>
</dbReference>
<keyword id="KW-0436">Ligase</keyword>
<keyword id="KW-0597">Phosphoprotein</keyword>
<keyword id="KW-0662">Pyridine nucleotide biosynthesis</keyword>
<keyword id="KW-1185">Reference proteome</keyword>